<accession>Q04705</accession>
<accession>D6VZC8</accession>
<organism>
    <name type="scientific">Saccharomyces cerevisiae (strain ATCC 204508 / S288c)</name>
    <name type="common">Baker's yeast</name>
    <dbReference type="NCBI Taxonomy" id="559292"/>
    <lineage>
        <taxon>Eukaryota</taxon>
        <taxon>Fungi</taxon>
        <taxon>Dikarya</taxon>
        <taxon>Ascomycota</taxon>
        <taxon>Saccharomycotina</taxon>
        <taxon>Saccharomycetes</taxon>
        <taxon>Saccharomycetales</taxon>
        <taxon>Saccharomycetaceae</taxon>
        <taxon>Saccharomyces</taxon>
    </lineage>
</organism>
<reference key="1">
    <citation type="journal article" date="1997" name="Nature">
        <title>The nucleotide sequence of Saccharomyces cerevisiae chromosome XIII.</title>
        <authorList>
            <person name="Bowman S."/>
            <person name="Churcher C.M."/>
            <person name="Badcock K."/>
            <person name="Brown D."/>
            <person name="Chillingworth T."/>
            <person name="Connor R."/>
            <person name="Dedman K."/>
            <person name="Devlin K."/>
            <person name="Gentles S."/>
            <person name="Hamlin N."/>
            <person name="Hunt S."/>
            <person name="Jagels K."/>
            <person name="Lye G."/>
            <person name="Moule S."/>
            <person name="Odell C."/>
            <person name="Pearson D."/>
            <person name="Rajandream M.A."/>
            <person name="Rice P."/>
            <person name="Skelton J."/>
            <person name="Walsh S.V."/>
            <person name="Whitehead S."/>
            <person name="Barrell B.G."/>
        </authorList>
    </citation>
    <scope>NUCLEOTIDE SEQUENCE [LARGE SCALE GENOMIC DNA]</scope>
    <source>
        <strain>ATCC 204508 / S288c</strain>
    </source>
</reference>
<reference key="2">
    <citation type="journal article" date="2014" name="G3 (Bethesda)">
        <title>The reference genome sequence of Saccharomyces cerevisiae: Then and now.</title>
        <authorList>
            <person name="Engel S.R."/>
            <person name="Dietrich F.S."/>
            <person name="Fisk D.G."/>
            <person name="Binkley G."/>
            <person name="Balakrishnan R."/>
            <person name="Costanzo M.C."/>
            <person name="Dwight S.S."/>
            <person name="Hitz B.C."/>
            <person name="Karra K."/>
            <person name="Nash R.S."/>
            <person name="Weng S."/>
            <person name="Wong E.D."/>
            <person name="Lloyd P."/>
            <person name="Skrzypek M.S."/>
            <person name="Miyasato S.R."/>
            <person name="Simison M."/>
            <person name="Cherry J.M."/>
        </authorList>
    </citation>
    <scope>GENOME REANNOTATION</scope>
    <source>
        <strain>ATCC 204508 / S288c</strain>
    </source>
</reference>
<reference key="3">
    <citation type="journal article" date="2007" name="Genome Res.">
        <title>Approaching a complete repository of sequence-verified protein-encoding clones for Saccharomyces cerevisiae.</title>
        <authorList>
            <person name="Hu Y."/>
            <person name="Rolfs A."/>
            <person name="Bhullar B."/>
            <person name="Murthy T.V.S."/>
            <person name="Zhu C."/>
            <person name="Berger M.F."/>
            <person name="Camargo A.A."/>
            <person name="Kelley F."/>
            <person name="McCarron S."/>
            <person name="Jepson D."/>
            <person name="Richardson A."/>
            <person name="Raphael J."/>
            <person name="Moreira D."/>
            <person name="Taycher E."/>
            <person name="Zuo D."/>
            <person name="Mohr S."/>
            <person name="Kane M.F."/>
            <person name="Williamson J."/>
            <person name="Simpson A.J.G."/>
            <person name="Bulyk M.L."/>
            <person name="Harlow E."/>
            <person name="Marsischky G."/>
            <person name="Kolodner R.D."/>
            <person name="LaBaer J."/>
        </authorList>
    </citation>
    <scope>NUCLEOTIDE SEQUENCE [GENOMIC DNA]</scope>
    <source>
        <strain>ATCC 204508 / S288c</strain>
    </source>
</reference>
<reference key="4">
    <citation type="journal article" date="2000" name="J. Cell Biol.">
        <title>Prm1p, a pheromone-regulated multispanning membrane protein, facilitates plasma membrane fusion during yeast mating.</title>
        <authorList>
            <person name="Heiman M.G."/>
            <person name="Walter P."/>
        </authorList>
    </citation>
    <scope>NOMENCLATURE</scope>
    <scope>INDUCTION</scope>
</reference>
<reference key="5">
    <citation type="journal article" date="2011" name="J. Biol. Chem.">
        <title>New regulators of a high affinity Ca2+ influx system revealed through a genome-wide screen in yeast.</title>
        <authorList>
            <person name="Martin D.C."/>
            <person name="Kim H."/>
            <person name="Mackin N.A."/>
            <person name="Maldonado-Baez L."/>
            <person name="Evangelista C.C. Jr."/>
            <person name="Beaudry V.G."/>
            <person name="Dudgeon D.D."/>
            <person name="Naiman D.Q."/>
            <person name="Erdman S.E."/>
            <person name="Cunningham K.W."/>
        </authorList>
    </citation>
    <scope>FUNCTION</scope>
    <scope>DISRUPTION PHENOTYPE</scope>
</reference>
<reference key="6">
    <citation type="journal article" date="2013" name="Eukaryot. Cell">
        <title>Activation of an essential calcium signaling pathway in Saccharomyces cerevisiae by Kch1 and Kch2, putative low-affinity potassium transporters.</title>
        <authorList>
            <person name="Stefan C.P."/>
            <person name="Zhang N."/>
            <person name="Sokabe T."/>
            <person name="Rivetta A."/>
            <person name="Slayman C.L."/>
            <person name="Montell C."/>
            <person name="Cunningham K.W."/>
        </authorList>
    </citation>
    <scope>FUNCTION</scope>
    <scope>DISRUPTION PHENOTYPE</scope>
    <scope>INDUCTION</scope>
    <scope>SUBCELLULAR LOCATION</scope>
    <scope>CATALYTIC ACTIVITY</scope>
</reference>
<evidence type="ECO:0000250" key="1">
    <source>
        <dbReference type="UniProtKB" id="P47114"/>
    </source>
</evidence>
<evidence type="ECO:0000255" key="2"/>
<evidence type="ECO:0000269" key="3">
    <source>
    </source>
</evidence>
<evidence type="ECO:0000269" key="4">
    <source>
    </source>
</evidence>
<evidence type="ECO:0000269" key="5">
    <source>
    </source>
</evidence>
<evidence type="ECO:0000303" key="6">
    <source>
    </source>
</evidence>
<evidence type="ECO:0000303" key="7">
    <source>
    </source>
</evidence>
<evidence type="ECO:0000305" key="8"/>
<protein>
    <recommendedName>
        <fullName evidence="6">Pheromone-regulated membrane protein 6</fullName>
    </recommendedName>
    <alternativeName>
        <fullName evidence="7">Low affinity K(+) transporter 2</fullName>
    </alternativeName>
</protein>
<gene>
    <name evidence="6" type="primary">PRM6</name>
    <name evidence="7" type="synonym">KCH2</name>
    <name type="ordered locus">YML047C</name>
    <name type="ORF">YM9827.05C</name>
</gene>
<feature type="chain" id="PRO_0000203256" description="Pheromone-regulated membrane protein 6">
    <location>
        <begin position="1"/>
        <end position="352"/>
    </location>
</feature>
<feature type="topological domain" description="Extracellular" evidence="1">
    <location>
        <begin position="1"/>
        <end position="36"/>
    </location>
</feature>
<feature type="transmembrane region" description="Helical" evidence="2">
    <location>
        <begin position="37"/>
        <end position="57"/>
    </location>
</feature>
<feature type="topological domain" description="Cytoplasmic" evidence="1">
    <location>
        <begin position="58"/>
        <end position="76"/>
    </location>
</feature>
<feature type="transmembrane region" description="Helical" evidence="2">
    <location>
        <begin position="77"/>
        <end position="97"/>
    </location>
</feature>
<feature type="topological domain" description="Extracellular" evidence="1">
    <location>
        <begin position="98"/>
        <end position="227"/>
    </location>
</feature>
<feature type="transmembrane region" description="Helical" evidence="2">
    <location>
        <begin position="228"/>
        <end position="248"/>
    </location>
</feature>
<feature type="topological domain" description="Cytoplasmic" evidence="1">
    <location>
        <begin position="249"/>
        <end position="352"/>
    </location>
</feature>
<sequence length="352" mass="41372">MESSLQKLKFQDIDINLIPTAKWTTKLQYILYTWCQSILHVAMFFSDIYTCIKLLAFNTWSNNIIQPFLEFRISKWLFSGCILCSSLILIWELVIGLRVYRKKEITSNYMNGISRLINCLFNFKKYQIFELIVLTDEKKFSKWLFFSYFEISGCLRLLFGDSPRQIINGLTLWSVLLTVSNETSSGTHSTQSLGNLDDLNGIINKIKHIAKTNYEESVILSFMLFSFIIWVILISKLILSIIIFIIFIRPRFLSSKRKVKGYELKLRKYVSKVIDENLSRTVYELGILIDDEEEGTICGDNKTQKKFDYDSPDYGDESTIPSYYCYSDVETYERVYTPIKAYFPQKYKHKYI</sequence>
<dbReference type="EMBL" id="Z47816">
    <property type="protein sequence ID" value="CAA87827.1"/>
    <property type="molecule type" value="Genomic_DNA"/>
</dbReference>
<dbReference type="EMBL" id="AY692915">
    <property type="protein sequence ID" value="AAT92934.1"/>
    <property type="molecule type" value="Genomic_DNA"/>
</dbReference>
<dbReference type="EMBL" id="BK006946">
    <property type="protein sequence ID" value="DAA09852.1"/>
    <property type="molecule type" value="Genomic_DNA"/>
</dbReference>
<dbReference type="PIR" id="S50945">
    <property type="entry name" value="S50945"/>
</dbReference>
<dbReference type="RefSeq" id="NP_013666.1">
    <property type="nucleotide sequence ID" value="NM_001182404.1"/>
</dbReference>
<dbReference type="BioGRID" id="35121">
    <property type="interactions" value="97"/>
</dbReference>
<dbReference type="FunCoup" id="Q04705">
    <property type="interactions" value="35"/>
</dbReference>
<dbReference type="STRING" id="4932.YML047C"/>
<dbReference type="TCDB" id="1.A.88.1.2">
    <property type="family name" value="the fungal potassium channel (f-kch) family"/>
</dbReference>
<dbReference type="iPTMnet" id="Q04705"/>
<dbReference type="PaxDb" id="4932-YML047C"/>
<dbReference type="EnsemblFungi" id="YML047C_mRNA">
    <property type="protein sequence ID" value="YML047C"/>
    <property type="gene ID" value="YML047C"/>
</dbReference>
<dbReference type="GeneID" id="854959"/>
<dbReference type="KEGG" id="sce:YML047C"/>
<dbReference type="AGR" id="SGD:S000004510"/>
<dbReference type="SGD" id="S000004510">
    <property type="gene designation" value="PRM6"/>
</dbReference>
<dbReference type="VEuPathDB" id="FungiDB:YML047C"/>
<dbReference type="eggNOG" id="ENOG502QVFG">
    <property type="taxonomic scope" value="Eukaryota"/>
</dbReference>
<dbReference type="GeneTree" id="ENSGT00940000176676"/>
<dbReference type="HOGENOM" id="CLU_036942_0_0_1"/>
<dbReference type="InParanoid" id="Q04705"/>
<dbReference type="OMA" id="RLINCLF"/>
<dbReference type="OrthoDB" id="2128042at2759"/>
<dbReference type="BioCyc" id="YEAST:G3O-32644-MONOMER"/>
<dbReference type="BioGRID-ORCS" id="854959">
    <property type="hits" value="0 hits in 10 CRISPR screens"/>
</dbReference>
<dbReference type="PRO" id="PR:Q04705"/>
<dbReference type="Proteomes" id="UP000002311">
    <property type="component" value="Chromosome XIII"/>
</dbReference>
<dbReference type="RNAct" id="Q04705">
    <property type="molecule type" value="protein"/>
</dbReference>
<dbReference type="GO" id="GO:0005934">
    <property type="term" value="C:cellular bud tip"/>
    <property type="evidence" value="ECO:0000314"/>
    <property type="project" value="SGD"/>
</dbReference>
<dbReference type="GO" id="GO:0000324">
    <property type="term" value="C:fungal-type vacuole"/>
    <property type="evidence" value="ECO:0007005"/>
    <property type="project" value="SGD"/>
</dbReference>
<dbReference type="GO" id="GO:0043332">
    <property type="term" value="C:mating projection tip"/>
    <property type="evidence" value="ECO:0000314"/>
    <property type="project" value="SGD"/>
</dbReference>
<dbReference type="GO" id="GO:0005886">
    <property type="term" value="C:plasma membrane"/>
    <property type="evidence" value="ECO:0000314"/>
    <property type="project" value="SGD"/>
</dbReference>
<dbReference type="GO" id="GO:0005775">
    <property type="term" value="C:vacuolar lumen"/>
    <property type="evidence" value="ECO:0007669"/>
    <property type="project" value="UniProtKB-SubCell"/>
</dbReference>
<dbReference type="GO" id="GO:0015079">
    <property type="term" value="F:potassium ion transmembrane transporter activity"/>
    <property type="evidence" value="ECO:0000316"/>
    <property type="project" value="SGD"/>
</dbReference>
<dbReference type="GO" id="GO:0071805">
    <property type="term" value="P:potassium ion transmembrane transport"/>
    <property type="evidence" value="ECO:0000316"/>
    <property type="project" value="SGD"/>
</dbReference>
<dbReference type="InterPro" id="IPR031606">
    <property type="entry name" value="Kch1/2"/>
</dbReference>
<dbReference type="PANTHER" id="PTHR36424:SF1">
    <property type="entry name" value="LOW AFFINITY K(+) TRANSPORTER 1-RELATED"/>
    <property type="match status" value="1"/>
</dbReference>
<dbReference type="PANTHER" id="PTHR36424">
    <property type="entry name" value="PHEROMONE-REGULATED MEMBRANE PROTEIN 6"/>
    <property type="match status" value="1"/>
</dbReference>
<dbReference type="Pfam" id="PF16944">
    <property type="entry name" value="KCH"/>
    <property type="match status" value="1"/>
</dbReference>
<keyword id="KW-1003">Cell membrane</keyword>
<keyword id="KW-0406">Ion transport</keyword>
<keyword id="KW-0472">Membrane</keyword>
<keyword id="KW-1185">Reference proteome</keyword>
<keyword id="KW-0812">Transmembrane</keyword>
<keyword id="KW-1133">Transmembrane helix</keyword>
<keyword id="KW-0813">Transport</keyword>
<keyword id="KW-0926">Vacuole</keyword>
<name>PRM6_YEAST</name>
<proteinExistence type="evidence at protein level"/>
<comment type="function">
    <text evidence="4 5">Low affinity potassium transporter that, with KCH1, participates in high-affinity Ca(2+) influx system (HACS) activation during the response to mating pheromone (PubMed:21252230, PubMed:23204190). Directly promotes K(+) influx and HACS may electrochemically respond to this K(+) influx (PubMed:23204190). KCH1 and PRM6/KCH2 act at the apex of the calcium signaling pathway that is used for survival during prolonged exposures to mating pheromones (PubMed:23204190).</text>
</comment>
<comment type="catalytic activity">
    <reaction evidence="5">
        <text>K(+)(in) = K(+)(out)</text>
        <dbReference type="Rhea" id="RHEA:29463"/>
        <dbReference type="ChEBI" id="CHEBI:29103"/>
    </reaction>
    <physiologicalReaction direction="right-to-left" evidence="5">
        <dbReference type="Rhea" id="RHEA:29465"/>
    </physiologicalReaction>
</comment>
<comment type="subcellular location">
    <subcellularLocation>
        <location evidence="5">Cell membrane</location>
        <topology evidence="2">Multi-pass membrane protein</topology>
    </subcellularLocation>
    <subcellularLocation>
        <location evidence="5">Bud tip</location>
    </subcellularLocation>
    <subcellularLocation>
        <location evidence="5">Vacuole lumen</location>
    </subcellularLocation>
    <text evidence="5">Localizes to the distal tip of growing buds.</text>
</comment>
<comment type="induction">
    <text evidence="3 5">Expression is strongly induced during the response to alpha-factor.</text>
</comment>
<comment type="disruption phenotype">
    <text evidence="4 5">Leads to high-affinity Ca(2+) influx system (HACS) deficiency (PubMed:21252230, PubMed:23204190). Causes a large increase of cell death in response to mating pheromone, when KCH1 is also deleted (PubMed:23204190).</text>
</comment>
<comment type="similarity">
    <text evidence="8">Belongs to the KCH1 low affinity K(+) transporter family.</text>
</comment>